<comment type="catalytic activity">
    <reaction evidence="2">
        <text>GTP + H2O = 7,8-dihydroneopterin 3'-triphosphate + formate + H(+)</text>
        <dbReference type="Rhea" id="RHEA:17473"/>
        <dbReference type="ChEBI" id="CHEBI:15377"/>
        <dbReference type="ChEBI" id="CHEBI:15378"/>
        <dbReference type="ChEBI" id="CHEBI:15740"/>
        <dbReference type="ChEBI" id="CHEBI:37565"/>
        <dbReference type="ChEBI" id="CHEBI:58462"/>
        <dbReference type="EC" id="3.5.4.16"/>
    </reaction>
</comment>
<comment type="pathway">
    <text evidence="2">Cofactor biosynthesis; 7,8-dihydroneopterin triphosphate biosynthesis; 7,8-dihydroneopterin triphosphate from GTP: step 1/1.</text>
</comment>
<comment type="subunit">
    <text evidence="1">Toroid-shaped homodecamer, composed of two pentamers of five dimers.</text>
</comment>
<comment type="similarity">
    <text evidence="2">Belongs to the GTP cyclohydrolase I family.</text>
</comment>
<gene>
    <name evidence="2" type="primary">folE</name>
    <name type="ordered locus">EF_3267</name>
</gene>
<evidence type="ECO:0000250" key="1"/>
<evidence type="ECO:0000255" key="2">
    <source>
        <dbReference type="HAMAP-Rule" id="MF_00223"/>
    </source>
</evidence>
<accession>Q82Z12</accession>
<sequence>MEQEKQAQIEQAVTTILEAVGEDTQRAGLIDTPKRVAKMYAEVFSGLTEPEFDDYKLFDSLNEGEMVLVKDIAFYSMCEHHLLPFYGKVHVAYLPEGGKVLGLSKLPRLVEHCAKRPTVQEDLTVTIARKLQENIPVKGIAVAIEAEHMCMTMRGVKTPQSSTKTFQFTGLFKEQEWKNQFLMEIR</sequence>
<feature type="chain" id="PRO_0000119407" description="GTP cyclohydrolase 1">
    <location>
        <begin position="1"/>
        <end position="186"/>
    </location>
</feature>
<feature type="binding site" evidence="2">
    <location>
        <position position="78"/>
    </location>
    <ligand>
        <name>Zn(2+)</name>
        <dbReference type="ChEBI" id="CHEBI:29105"/>
    </ligand>
</feature>
<feature type="binding site" evidence="2">
    <location>
        <position position="81"/>
    </location>
    <ligand>
        <name>Zn(2+)</name>
        <dbReference type="ChEBI" id="CHEBI:29105"/>
    </ligand>
</feature>
<feature type="binding site" evidence="2">
    <location>
        <position position="150"/>
    </location>
    <ligand>
        <name>Zn(2+)</name>
        <dbReference type="ChEBI" id="CHEBI:29105"/>
    </ligand>
</feature>
<organism>
    <name type="scientific">Enterococcus faecalis (strain ATCC 700802 / V583)</name>
    <dbReference type="NCBI Taxonomy" id="226185"/>
    <lineage>
        <taxon>Bacteria</taxon>
        <taxon>Bacillati</taxon>
        <taxon>Bacillota</taxon>
        <taxon>Bacilli</taxon>
        <taxon>Lactobacillales</taxon>
        <taxon>Enterococcaceae</taxon>
        <taxon>Enterococcus</taxon>
    </lineage>
</organism>
<proteinExistence type="inferred from homology"/>
<protein>
    <recommendedName>
        <fullName evidence="2">GTP cyclohydrolase 1</fullName>
        <ecNumber evidence="2">3.5.4.16</ecNumber>
    </recommendedName>
    <alternativeName>
        <fullName evidence="2">GTP cyclohydrolase I</fullName>
        <shortName evidence="2">GTP-CH-I</shortName>
    </alternativeName>
</protein>
<dbReference type="EC" id="3.5.4.16" evidence="2"/>
<dbReference type="EMBL" id="AE016830">
    <property type="protein sequence ID" value="AAO82934.1"/>
    <property type="molecule type" value="Genomic_DNA"/>
</dbReference>
<dbReference type="RefSeq" id="NP_816864.1">
    <property type="nucleotide sequence ID" value="NC_004668.1"/>
</dbReference>
<dbReference type="SMR" id="Q82Z12"/>
<dbReference type="STRING" id="226185.EF_3267"/>
<dbReference type="EnsemblBacteria" id="AAO82934">
    <property type="protein sequence ID" value="AAO82934"/>
    <property type="gene ID" value="EF_3267"/>
</dbReference>
<dbReference type="KEGG" id="efa:EF3267"/>
<dbReference type="PATRIC" id="fig|226185.45.peg.317"/>
<dbReference type="eggNOG" id="COG0302">
    <property type="taxonomic scope" value="Bacteria"/>
</dbReference>
<dbReference type="HOGENOM" id="CLU_049768_3_2_9"/>
<dbReference type="UniPathway" id="UPA00848">
    <property type="reaction ID" value="UER00151"/>
</dbReference>
<dbReference type="Proteomes" id="UP000001415">
    <property type="component" value="Chromosome"/>
</dbReference>
<dbReference type="GO" id="GO:0005737">
    <property type="term" value="C:cytoplasm"/>
    <property type="evidence" value="ECO:0007669"/>
    <property type="project" value="TreeGrafter"/>
</dbReference>
<dbReference type="GO" id="GO:0005525">
    <property type="term" value="F:GTP binding"/>
    <property type="evidence" value="ECO:0007669"/>
    <property type="project" value="UniProtKB-KW"/>
</dbReference>
<dbReference type="GO" id="GO:0003934">
    <property type="term" value="F:GTP cyclohydrolase I activity"/>
    <property type="evidence" value="ECO:0007669"/>
    <property type="project" value="UniProtKB-UniRule"/>
</dbReference>
<dbReference type="GO" id="GO:0008270">
    <property type="term" value="F:zinc ion binding"/>
    <property type="evidence" value="ECO:0007669"/>
    <property type="project" value="UniProtKB-UniRule"/>
</dbReference>
<dbReference type="GO" id="GO:0006730">
    <property type="term" value="P:one-carbon metabolic process"/>
    <property type="evidence" value="ECO:0007669"/>
    <property type="project" value="UniProtKB-UniRule"/>
</dbReference>
<dbReference type="GO" id="GO:0006729">
    <property type="term" value="P:tetrahydrobiopterin biosynthetic process"/>
    <property type="evidence" value="ECO:0007669"/>
    <property type="project" value="TreeGrafter"/>
</dbReference>
<dbReference type="GO" id="GO:0046654">
    <property type="term" value="P:tetrahydrofolate biosynthetic process"/>
    <property type="evidence" value="ECO:0007669"/>
    <property type="project" value="UniProtKB-UniRule"/>
</dbReference>
<dbReference type="FunFam" id="1.10.286.10:FF:000001">
    <property type="entry name" value="GTP cyclohydrolase 1"/>
    <property type="match status" value="1"/>
</dbReference>
<dbReference type="FunFam" id="3.30.1130.10:FF:000001">
    <property type="entry name" value="GTP cyclohydrolase 1"/>
    <property type="match status" value="1"/>
</dbReference>
<dbReference type="Gene3D" id="1.10.286.10">
    <property type="match status" value="1"/>
</dbReference>
<dbReference type="Gene3D" id="3.30.1130.10">
    <property type="match status" value="1"/>
</dbReference>
<dbReference type="HAMAP" id="MF_00223">
    <property type="entry name" value="FolE"/>
    <property type="match status" value="1"/>
</dbReference>
<dbReference type="InterPro" id="IPR043133">
    <property type="entry name" value="GTP-CH-I_C/QueF"/>
</dbReference>
<dbReference type="InterPro" id="IPR043134">
    <property type="entry name" value="GTP-CH-I_N"/>
</dbReference>
<dbReference type="InterPro" id="IPR001474">
    <property type="entry name" value="GTP_CycHdrlase_I"/>
</dbReference>
<dbReference type="InterPro" id="IPR018234">
    <property type="entry name" value="GTP_CycHdrlase_I_CS"/>
</dbReference>
<dbReference type="InterPro" id="IPR020602">
    <property type="entry name" value="GTP_CycHdrlase_I_dom"/>
</dbReference>
<dbReference type="NCBIfam" id="TIGR00063">
    <property type="entry name" value="folE"/>
    <property type="match status" value="1"/>
</dbReference>
<dbReference type="NCBIfam" id="NF006825">
    <property type="entry name" value="PRK09347.1-2"/>
    <property type="match status" value="1"/>
</dbReference>
<dbReference type="NCBIfam" id="NF006826">
    <property type="entry name" value="PRK09347.1-3"/>
    <property type="match status" value="1"/>
</dbReference>
<dbReference type="PANTHER" id="PTHR11109:SF7">
    <property type="entry name" value="GTP CYCLOHYDROLASE 1"/>
    <property type="match status" value="1"/>
</dbReference>
<dbReference type="PANTHER" id="PTHR11109">
    <property type="entry name" value="GTP CYCLOHYDROLASE I"/>
    <property type="match status" value="1"/>
</dbReference>
<dbReference type="Pfam" id="PF01227">
    <property type="entry name" value="GTP_cyclohydroI"/>
    <property type="match status" value="1"/>
</dbReference>
<dbReference type="SUPFAM" id="SSF55620">
    <property type="entry name" value="Tetrahydrobiopterin biosynthesis enzymes-like"/>
    <property type="match status" value="1"/>
</dbReference>
<dbReference type="PROSITE" id="PS00859">
    <property type="entry name" value="GTP_CYCLOHYDROL_1_1"/>
    <property type="match status" value="1"/>
</dbReference>
<keyword id="KW-0342">GTP-binding</keyword>
<keyword id="KW-0378">Hydrolase</keyword>
<keyword id="KW-0479">Metal-binding</keyword>
<keyword id="KW-0547">Nucleotide-binding</keyword>
<keyword id="KW-0554">One-carbon metabolism</keyword>
<keyword id="KW-1185">Reference proteome</keyword>
<keyword id="KW-0862">Zinc</keyword>
<reference key="1">
    <citation type="journal article" date="2003" name="Science">
        <title>Role of mobile DNA in the evolution of vancomycin-resistant Enterococcus faecalis.</title>
        <authorList>
            <person name="Paulsen I.T."/>
            <person name="Banerjei L."/>
            <person name="Myers G.S.A."/>
            <person name="Nelson K.E."/>
            <person name="Seshadri R."/>
            <person name="Read T.D."/>
            <person name="Fouts D.E."/>
            <person name="Eisen J.A."/>
            <person name="Gill S.R."/>
            <person name="Heidelberg J.F."/>
            <person name="Tettelin H."/>
            <person name="Dodson R.J."/>
            <person name="Umayam L.A."/>
            <person name="Brinkac L.M."/>
            <person name="Beanan M.J."/>
            <person name="Daugherty S.C."/>
            <person name="DeBoy R.T."/>
            <person name="Durkin S.A."/>
            <person name="Kolonay J.F."/>
            <person name="Madupu R."/>
            <person name="Nelson W.C."/>
            <person name="Vamathevan J.J."/>
            <person name="Tran B."/>
            <person name="Upton J."/>
            <person name="Hansen T."/>
            <person name="Shetty J."/>
            <person name="Khouri H.M."/>
            <person name="Utterback T.R."/>
            <person name="Radune D."/>
            <person name="Ketchum K.A."/>
            <person name="Dougherty B.A."/>
            <person name="Fraser C.M."/>
        </authorList>
    </citation>
    <scope>NUCLEOTIDE SEQUENCE [LARGE SCALE GENOMIC DNA]</scope>
    <source>
        <strain>ATCC 700802 / V583</strain>
    </source>
</reference>
<name>GCH1_ENTFA</name>